<name>SAT_ACAM1</name>
<feature type="chain" id="PRO_0000340604" description="Sulfate adenylyltransferase">
    <location>
        <begin position="1"/>
        <end position="388"/>
    </location>
</feature>
<reference key="1">
    <citation type="journal article" date="2008" name="Proc. Natl. Acad. Sci. U.S.A.">
        <title>Niche adaptation and genome expansion in the chlorophyll d-producing cyanobacterium Acaryochloris marina.</title>
        <authorList>
            <person name="Swingley W.D."/>
            <person name="Chen M."/>
            <person name="Cheung P.C."/>
            <person name="Conrad A.L."/>
            <person name="Dejesa L.C."/>
            <person name="Hao J."/>
            <person name="Honchak B.M."/>
            <person name="Karbach L.E."/>
            <person name="Kurdoglu A."/>
            <person name="Lahiri S."/>
            <person name="Mastrian S.D."/>
            <person name="Miyashita H."/>
            <person name="Page L."/>
            <person name="Ramakrishna P."/>
            <person name="Satoh S."/>
            <person name="Sattley W.M."/>
            <person name="Shimada Y."/>
            <person name="Taylor H.L."/>
            <person name="Tomo T."/>
            <person name="Tsuchiya T."/>
            <person name="Wang Z.T."/>
            <person name="Raymond J."/>
            <person name="Mimuro M."/>
            <person name="Blankenship R.E."/>
            <person name="Touchman J.W."/>
        </authorList>
    </citation>
    <scope>NUCLEOTIDE SEQUENCE [LARGE SCALE GENOMIC DNA]</scope>
    <source>
        <strain>MBIC 11017</strain>
    </source>
</reference>
<evidence type="ECO:0000255" key="1">
    <source>
        <dbReference type="HAMAP-Rule" id="MF_00066"/>
    </source>
</evidence>
<accession>B0BZ94</accession>
<protein>
    <recommendedName>
        <fullName evidence="1">Sulfate adenylyltransferase</fullName>
        <ecNumber evidence="1">2.7.7.4</ecNumber>
    </recommendedName>
    <alternativeName>
        <fullName evidence="1">ATP-sulfurylase</fullName>
    </alternativeName>
    <alternativeName>
        <fullName evidence="1">Sulfate adenylate transferase</fullName>
        <shortName evidence="1">SAT</shortName>
    </alternativeName>
</protein>
<proteinExistence type="inferred from homology"/>
<keyword id="KW-0067">ATP-binding</keyword>
<keyword id="KW-0547">Nucleotide-binding</keyword>
<keyword id="KW-0548">Nucleotidyltransferase</keyword>
<keyword id="KW-1185">Reference proteome</keyword>
<keyword id="KW-0808">Transferase</keyword>
<dbReference type="EC" id="2.7.7.4" evidence="1"/>
<dbReference type="EMBL" id="CP000828">
    <property type="protein sequence ID" value="ABW29538.1"/>
    <property type="molecule type" value="Genomic_DNA"/>
</dbReference>
<dbReference type="RefSeq" id="WP_012164847.1">
    <property type="nucleotide sequence ID" value="NC_009925.1"/>
</dbReference>
<dbReference type="SMR" id="B0BZ94"/>
<dbReference type="STRING" id="329726.AM1_4564"/>
<dbReference type="KEGG" id="amr:AM1_4564"/>
<dbReference type="eggNOG" id="COG2046">
    <property type="taxonomic scope" value="Bacteria"/>
</dbReference>
<dbReference type="HOGENOM" id="CLU_022950_1_1_3"/>
<dbReference type="OrthoDB" id="9804504at2"/>
<dbReference type="UniPathway" id="UPA00140">
    <property type="reaction ID" value="UER00204"/>
</dbReference>
<dbReference type="Proteomes" id="UP000000268">
    <property type="component" value="Chromosome"/>
</dbReference>
<dbReference type="GO" id="GO:0005524">
    <property type="term" value="F:ATP binding"/>
    <property type="evidence" value="ECO:0007669"/>
    <property type="project" value="UniProtKB-KW"/>
</dbReference>
<dbReference type="GO" id="GO:0004781">
    <property type="term" value="F:sulfate adenylyltransferase (ATP) activity"/>
    <property type="evidence" value="ECO:0007669"/>
    <property type="project" value="UniProtKB-UniRule"/>
</dbReference>
<dbReference type="GO" id="GO:0070814">
    <property type="term" value="P:hydrogen sulfide biosynthetic process"/>
    <property type="evidence" value="ECO:0007669"/>
    <property type="project" value="UniProtKB-UniRule"/>
</dbReference>
<dbReference type="GO" id="GO:0000103">
    <property type="term" value="P:sulfate assimilation"/>
    <property type="evidence" value="ECO:0007669"/>
    <property type="project" value="UniProtKB-UniRule"/>
</dbReference>
<dbReference type="CDD" id="cd00517">
    <property type="entry name" value="ATPS"/>
    <property type="match status" value="1"/>
</dbReference>
<dbReference type="Gene3D" id="3.40.50.620">
    <property type="entry name" value="HUPs"/>
    <property type="match status" value="1"/>
</dbReference>
<dbReference type="Gene3D" id="3.10.400.10">
    <property type="entry name" value="Sulfate adenylyltransferase"/>
    <property type="match status" value="1"/>
</dbReference>
<dbReference type="HAMAP" id="MF_00066">
    <property type="entry name" value="Sulf_adenylyltr"/>
    <property type="match status" value="1"/>
</dbReference>
<dbReference type="InterPro" id="IPR025980">
    <property type="entry name" value="ATP-Sase_PUA-like_dom"/>
</dbReference>
<dbReference type="InterPro" id="IPR015947">
    <property type="entry name" value="PUA-like_sf"/>
</dbReference>
<dbReference type="InterPro" id="IPR014729">
    <property type="entry name" value="Rossmann-like_a/b/a_fold"/>
</dbReference>
<dbReference type="InterPro" id="IPR020792">
    <property type="entry name" value="SO4_adenylyltransferase_pro"/>
</dbReference>
<dbReference type="InterPro" id="IPR024951">
    <property type="entry name" value="Sulfurylase_cat_dom"/>
</dbReference>
<dbReference type="InterPro" id="IPR002650">
    <property type="entry name" value="Sulphate_adenylyltransferase"/>
</dbReference>
<dbReference type="NCBIfam" id="NF003166">
    <property type="entry name" value="PRK04149.1"/>
    <property type="match status" value="1"/>
</dbReference>
<dbReference type="NCBIfam" id="TIGR00339">
    <property type="entry name" value="sopT"/>
    <property type="match status" value="1"/>
</dbReference>
<dbReference type="PANTHER" id="PTHR43509">
    <property type="match status" value="1"/>
</dbReference>
<dbReference type="PANTHER" id="PTHR43509:SF1">
    <property type="entry name" value="SULFATE ADENYLYLTRANSFERASE"/>
    <property type="match status" value="1"/>
</dbReference>
<dbReference type="Pfam" id="PF01747">
    <property type="entry name" value="ATP-sulfurylase"/>
    <property type="match status" value="1"/>
</dbReference>
<dbReference type="Pfam" id="PF14306">
    <property type="entry name" value="PUA_2"/>
    <property type="match status" value="1"/>
</dbReference>
<dbReference type="SUPFAM" id="SSF52374">
    <property type="entry name" value="Nucleotidylyl transferase"/>
    <property type="match status" value="1"/>
</dbReference>
<dbReference type="SUPFAM" id="SSF88697">
    <property type="entry name" value="PUA domain-like"/>
    <property type="match status" value="1"/>
</dbReference>
<comment type="catalytic activity">
    <reaction evidence="1">
        <text>sulfate + ATP + H(+) = adenosine 5'-phosphosulfate + diphosphate</text>
        <dbReference type="Rhea" id="RHEA:18133"/>
        <dbReference type="ChEBI" id="CHEBI:15378"/>
        <dbReference type="ChEBI" id="CHEBI:16189"/>
        <dbReference type="ChEBI" id="CHEBI:30616"/>
        <dbReference type="ChEBI" id="CHEBI:33019"/>
        <dbReference type="ChEBI" id="CHEBI:58243"/>
        <dbReference type="EC" id="2.7.7.4"/>
    </reaction>
</comment>
<comment type="pathway">
    <text evidence="1">Sulfur metabolism; hydrogen sulfide biosynthesis; sulfite from sulfate: step 1/3.</text>
</comment>
<comment type="similarity">
    <text evidence="1">Belongs to the sulfate adenylyltransferase family.</text>
</comment>
<gene>
    <name evidence="1" type="primary">sat</name>
    <name type="ordered locus">AM1_4564</name>
</gene>
<sequence length="388" mass="43199">MTQHQDAIAPHGGSLINRVASETQKQDLLAKGDSLPRVQLDKRATSDLEMIAIGGFSPLSGFMGQADYEQVVHHMHLDNGLPWSIPVTLSVDEGVADSLNVGDLVRLDDPTGAFVGVLELTEKYTYDKTQEAVQVYKTDEMKHPGVKVVFEQGAVNLAGPVWLLERQAHPQFPSYQIDPAASRQLFRERGWNTIVGFQTRNPIHRAHEYIQKCALETVDGLFLHPLVGATKSDDIPADVRMRCYEIMMEHYFPEDRVILAINPAAMRYAGPREAIFHALVRKNYGCTHFIVGRDHAGVGDYYGTYDAQHIFDTLDAQALGITPMKFEHAFYCKKTLSMATTKTSPSGPEDRVHLSGTKVREMLRRGELPPPEFSRPEVASELAAAMKA</sequence>
<organism>
    <name type="scientific">Acaryochloris marina (strain MBIC 11017)</name>
    <dbReference type="NCBI Taxonomy" id="329726"/>
    <lineage>
        <taxon>Bacteria</taxon>
        <taxon>Bacillati</taxon>
        <taxon>Cyanobacteriota</taxon>
        <taxon>Cyanophyceae</taxon>
        <taxon>Acaryochloridales</taxon>
        <taxon>Acaryochloridaceae</taxon>
        <taxon>Acaryochloris</taxon>
    </lineage>
</organism>